<dbReference type="EC" id="6.3.2.6" evidence="1"/>
<dbReference type="EMBL" id="CP000471">
    <property type="protein sequence ID" value="ABK43022.1"/>
    <property type="molecule type" value="Genomic_DNA"/>
</dbReference>
<dbReference type="RefSeq" id="WP_011712189.1">
    <property type="nucleotide sequence ID" value="NC_008576.1"/>
</dbReference>
<dbReference type="SMR" id="A0L4X9"/>
<dbReference type="STRING" id="156889.Mmc1_0497"/>
<dbReference type="KEGG" id="mgm:Mmc1_0497"/>
<dbReference type="eggNOG" id="COG0152">
    <property type="taxonomic scope" value="Bacteria"/>
</dbReference>
<dbReference type="HOGENOM" id="CLU_061495_2_0_5"/>
<dbReference type="OrthoDB" id="9801549at2"/>
<dbReference type="UniPathway" id="UPA00074">
    <property type="reaction ID" value="UER00131"/>
</dbReference>
<dbReference type="Proteomes" id="UP000002586">
    <property type="component" value="Chromosome"/>
</dbReference>
<dbReference type="GO" id="GO:0005829">
    <property type="term" value="C:cytosol"/>
    <property type="evidence" value="ECO:0007669"/>
    <property type="project" value="TreeGrafter"/>
</dbReference>
<dbReference type="GO" id="GO:0005524">
    <property type="term" value="F:ATP binding"/>
    <property type="evidence" value="ECO:0007669"/>
    <property type="project" value="UniProtKB-KW"/>
</dbReference>
<dbReference type="GO" id="GO:0004639">
    <property type="term" value="F:phosphoribosylaminoimidazolesuccinocarboxamide synthase activity"/>
    <property type="evidence" value="ECO:0007669"/>
    <property type="project" value="UniProtKB-UniRule"/>
</dbReference>
<dbReference type="GO" id="GO:0006189">
    <property type="term" value="P:'de novo' IMP biosynthetic process"/>
    <property type="evidence" value="ECO:0007669"/>
    <property type="project" value="UniProtKB-UniRule"/>
</dbReference>
<dbReference type="GO" id="GO:0009236">
    <property type="term" value="P:cobalamin biosynthetic process"/>
    <property type="evidence" value="ECO:0007669"/>
    <property type="project" value="InterPro"/>
</dbReference>
<dbReference type="CDD" id="cd01415">
    <property type="entry name" value="SAICAR_synt_PurC"/>
    <property type="match status" value="1"/>
</dbReference>
<dbReference type="FunFam" id="3.30.470.20:FF:000006">
    <property type="entry name" value="Phosphoribosylaminoimidazole-succinocarboxamide synthase"/>
    <property type="match status" value="1"/>
</dbReference>
<dbReference type="Gene3D" id="3.30.470.20">
    <property type="entry name" value="ATP-grasp fold, B domain"/>
    <property type="match status" value="1"/>
</dbReference>
<dbReference type="Gene3D" id="3.30.200.20">
    <property type="entry name" value="Phosphorylase Kinase, domain 1"/>
    <property type="match status" value="1"/>
</dbReference>
<dbReference type="HAMAP" id="MF_00137">
    <property type="entry name" value="SAICAR_synth"/>
    <property type="match status" value="1"/>
</dbReference>
<dbReference type="InterPro" id="IPR028923">
    <property type="entry name" value="SAICAR_synt/ADE2_N"/>
</dbReference>
<dbReference type="InterPro" id="IPR033934">
    <property type="entry name" value="SAICAR_synt_PurC"/>
</dbReference>
<dbReference type="InterPro" id="IPR001636">
    <property type="entry name" value="SAICAR_synth"/>
</dbReference>
<dbReference type="InterPro" id="IPR050089">
    <property type="entry name" value="SAICAR_synthetase"/>
</dbReference>
<dbReference type="InterPro" id="IPR018236">
    <property type="entry name" value="SAICAR_synthetase_CS"/>
</dbReference>
<dbReference type="NCBIfam" id="TIGR00081">
    <property type="entry name" value="purC"/>
    <property type="match status" value="1"/>
</dbReference>
<dbReference type="PANTHER" id="PTHR43599">
    <property type="entry name" value="MULTIFUNCTIONAL PROTEIN ADE2"/>
    <property type="match status" value="1"/>
</dbReference>
<dbReference type="PANTHER" id="PTHR43599:SF3">
    <property type="entry name" value="SI:DKEY-6E2.2"/>
    <property type="match status" value="1"/>
</dbReference>
<dbReference type="Pfam" id="PF01259">
    <property type="entry name" value="SAICAR_synt"/>
    <property type="match status" value="1"/>
</dbReference>
<dbReference type="SUPFAM" id="SSF56104">
    <property type="entry name" value="SAICAR synthase-like"/>
    <property type="match status" value="1"/>
</dbReference>
<dbReference type="PROSITE" id="PS01057">
    <property type="entry name" value="SAICAR_SYNTHETASE_1"/>
    <property type="match status" value="1"/>
</dbReference>
<proteinExistence type="inferred from homology"/>
<protein>
    <recommendedName>
        <fullName evidence="1">Phosphoribosylaminoimidazole-succinocarboxamide synthase</fullName>
        <ecNumber evidence="1">6.3.2.6</ecNumber>
    </recommendedName>
    <alternativeName>
        <fullName evidence="1">SAICAR synthetase</fullName>
    </alternativeName>
</protein>
<comment type="catalytic activity">
    <reaction evidence="1">
        <text>5-amino-1-(5-phospho-D-ribosyl)imidazole-4-carboxylate + L-aspartate + ATP = (2S)-2-[5-amino-1-(5-phospho-beta-D-ribosyl)imidazole-4-carboxamido]succinate + ADP + phosphate + 2 H(+)</text>
        <dbReference type="Rhea" id="RHEA:22628"/>
        <dbReference type="ChEBI" id="CHEBI:15378"/>
        <dbReference type="ChEBI" id="CHEBI:29991"/>
        <dbReference type="ChEBI" id="CHEBI:30616"/>
        <dbReference type="ChEBI" id="CHEBI:43474"/>
        <dbReference type="ChEBI" id="CHEBI:58443"/>
        <dbReference type="ChEBI" id="CHEBI:77657"/>
        <dbReference type="ChEBI" id="CHEBI:456216"/>
        <dbReference type="EC" id="6.3.2.6"/>
    </reaction>
</comment>
<comment type="pathway">
    <text evidence="1">Purine metabolism; IMP biosynthesis via de novo pathway; 5-amino-1-(5-phospho-D-ribosyl)imidazole-4-carboxamide from 5-amino-1-(5-phospho-D-ribosyl)imidazole-4-carboxylate: step 1/2.</text>
</comment>
<comment type="similarity">
    <text evidence="1">Belongs to the SAICAR synthetase family.</text>
</comment>
<keyword id="KW-0067">ATP-binding</keyword>
<keyword id="KW-0436">Ligase</keyword>
<keyword id="KW-0547">Nucleotide-binding</keyword>
<keyword id="KW-0658">Purine biosynthesis</keyword>
<keyword id="KW-1185">Reference proteome</keyword>
<gene>
    <name evidence="1" type="primary">purC</name>
    <name type="ordered locus">Mmc1_0497</name>
</gene>
<feature type="chain" id="PRO_1000018723" description="Phosphoribosylaminoimidazole-succinocarboxamide synthase">
    <location>
        <begin position="1"/>
        <end position="242"/>
    </location>
</feature>
<organism>
    <name type="scientific">Magnetococcus marinus (strain ATCC BAA-1437 / JCM 17883 / MC-1)</name>
    <dbReference type="NCBI Taxonomy" id="156889"/>
    <lineage>
        <taxon>Bacteria</taxon>
        <taxon>Pseudomonadati</taxon>
        <taxon>Pseudomonadota</taxon>
        <taxon>Alphaproteobacteria</taxon>
        <taxon>Magnetococcales</taxon>
        <taxon>Magnetococcaceae</taxon>
        <taxon>Magnetococcus</taxon>
    </lineage>
</organism>
<sequence length="242" mass="27533">MQKGEKLYEGKAKVLFATDDPNMLIQYFKDDATAFNGIKKGTIADKGVVNSLISTRIYHILEKVGIPTHLEELLSPREQLVHKVEILPIEVVIRNRVAGSLARRLGIEEGTELARPLVEFYYKNDELDDPMVTIDHAEVFGWAKHREIEEMIEMSLRINDILIGFFANIGIDLIDYKLEYGRLAVSPSTLVLADEISPDGCRLWDMETGEKLDKDRFRRDLGGVEEAYQEVARRMGLEVPGR</sequence>
<evidence type="ECO:0000255" key="1">
    <source>
        <dbReference type="HAMAP-Rule" id="MF_00137"/>
    </source>
</evidence>
<name>PUR7_MAGMM</name>
<accession>A0L4X9</accession>
<reference key="1">
    <citation type="journal article" date="2009" name="Appl. Environ. Microbiol.">
        <title>Complete genome sequence of the chemolithoautotrophic marine magnetotactic coccus strain MC-1.</title>
        <authorList>
            <person name="Schubbe S."/>
            <person name="Williams T.J."/>
            <person name="Xie G."/>
            <person name="Kiss H.E."/>
            <person name="Brettin T.S."/>
            <person name="Martinez D."/>
            <person name="Ross C.A."/>
            <person name="Schuler D."/>
            <person name="Cox B.L."/>
            <person name="Nealson K.H."/>
            <person name="Bazylinski D.A."/>
        </authorList>
    </citation>
    <scope>NUCLEOTIDE SEQUENCE [LARGE SCALE GENOMIC DNA]</scope>
    <source>
        <strain>ATCC BAA-1437 / JCM 17883 / MC-1</strain>
    </source>
</reference>